<organism>
    <name type="scientific">Vibrio campbellii (strain ATCC BAA-1116)</name>
    <dbReference type="NCBI Taxonomy" id="2902295"/>
    <lineage>
        <taxon>Bacteria</taxon>
        <taxon>Pseudomonadati</taxon>
        <taxon>Pseudomonadota</taxon>
        <taxon>Gammaproteobacteria</taxon>
        <taxon>Vibrionales</taxon>
        <taxon>Vibrionaceae</taxon>
        <taxon>Vibrio</taxon>
    </lineage>
</organism>
<accession>A7N6L2</accession>
<sequence>MSGLSESAKLVKEALEQRGLETPMRPNNVSREEKKEKIEHHMREILGLLQLDLTDDSLEETPHRIAKMYVDEIFSGLDYSNFPKITVIENKMNVSEMVRVKDITVTSTCEHHLVTIDGKAAVAYIPRGKIIGLSKINRIVRFFAQRPQVQERMTQQILVALQTLLESDDVAVTIDATHYCVKSRGVMDATSETTTTALGGIFKSNPATRAEFLHGLR</sequence>
<protein>
    <recommendedName>
        <fullName evidence="2">GTP cyclohydrolase 1</fullName>
        <ecNumber evidence="2">3.5.4.16</ecNumber>
    </recommendedName>
    <alternativeName>
        <fullName evidence="2">GTP cyclohydrolase I</fullName>
        <shortName evidence="2">GTP-CH-I</shortName>
    </alternativeName>
</protein>
<name>GCH1_VIBC1</name>
<proteinExistence type="inferred from homology"/>
<keyword id="KW-0342">GTP-binding</keyword>
<keyword id="KW-0378">Hydrolase</keyword>
<keyword id="KW-0479">Metal-binding</keyword>
<keyword id="KW-0547">Nucleotide-binding</keyword>
<keyword id="KW-0554">One-carbon metabolism</keyword>
<keyword id="KW-0862">Zinc</keyword>
<dbReference type="EC" id="3.5.4.16" evidence="2"/>
<dbReference type="EMBL" id="CP000790">
    <property type="protein sequence ID" value="ABU74127.1"/>
    <property type="molecule type" value="Genomic_DNA"/>
</dbReference>
<dbReference type="RefSeq" id="WP_005373478.1">
    <property type="nucleotide sequence ID" value="NC_022270.1"/>
</dbReference>
<dbReference type="SMR" id="A7N6L2"/>
<dbReference type="GeneID" id="75165955"/>
<dbReference type="KEGG" id="vha:VIBHAR_06235"/>
<dbReference type="PATRIC" id="fig|338187.25.peg.4103"/>
<dbReference type="UniPathway" id="UPA00848">
    <property type="reaction ID" value="UER00151"/>
</dbReference>
<dbReference type="Proteomes" id="UP000008152">
    <property type="component" value="Chromosome II"/>
</dbReference>
<dbReference type="GO" id="GO:0005737">
    <property type="term" value="C:cytoplasm"/>
    <property type="evidence" value="ECO:0007669"/>
    <property type="project" value="TreeGrafter"/>
</dbReference>
<dbReference type="GO" id="GO:0005525">
    <property type="term" value="F:GTP binding"/>
    <property type="evidence" value="ECO:0007669"/>
    <property type="project" value="UniProtKB-KW"/>
</dbReference>
<dbReference type="GO" id="GO:0003934">
    <property type="term" value="F:GTP cyclohydrolase I activity"/>
    <property type="evidence" value="ECO:0007669"/>
    <property type="project" value="UniProtKB-UniRule"/>
</dbReference>
<dbReference type="GO" id="GO:0008270">
    <property type="term" value="F:zinc ion binding"/>
    <property type="evidence" value="ECO:0007669"/>
    <property type="project" value="UniProtKB-UniRule"/>
</dbReference>
<dbReference type="GO" id="GO:0006730">
    <property type="term" value="P:one-carbon metabolic process"/>
    <property type="evidence" value="ECO:0007669"/>
    <property type="project" value="UniProtKB-UniRule"/>
</dbReference>
<dbReference type="GO" id="GO:0006729">
    <property type="term" value="P:tetrahydrobiopterin biosynthetic process"/>
    <property type="evidence" value="ECO:0007669"/>
    <property type="project" value="TreeGrafter"/>
</dbReference>
<dbReference type="GO" id="GO:0046654">
    <property type="term" value="P:tetrahydrofolate biosynthetic process"/>
    <property type="evidence" value="ECO:0007669"/>
    <property type="project" value="UniProtKB-UniRule"/>
</dbReference>
<dbReference type="FunFam" id="1.10.286.10:FF:000002">
    <property type="entry name" value="GTP cyclohydrolase 1"/>
    <property type="match status" value="1"/>
</dbReference>
<dbReference type="FunFam" id="3.30.1130.10:FF:000001">
    <property type="entry name" value="GTP cyclohydrolase 1"/>
    <property type="match status" value="1"/>
</dbReference>
<dbReference type="Gene3D" id="1.10.286.10">
    <property type="match status" value="1"/>
</dbReference>
<dbReference type="Gene3D" id="3.30.1130.10">
    <property type="match status" value="1"/>
</dbReference>
<dbReference type="HAMAP" id="MF_00223">
    <property type="entry name" value="FolE"/>
    <property type="match status" value="1"/>
</dbReference>
<dbReference type="InterPro" id="IPR043133">
    <property type="entry name" value="GTP-CH-I_C/QueF"/>
</dbReference>
<dbReference type="InterPro" id="IPR043134">
    <property type="entry name" value="GTP-CH-I_N"/>
</dbReference>
<dbReference type="InterPro" id="IPR001474">
    <property type="entry name" value="GTP_CycHdrlase_I"/>
</dbReference>
<dbReference type="InterPro" id="IPR018234">
    <property type="entry name" value="GTP_CycHdrlase_I_CS"/>
</dbReference>
<dbReference type="InterPro" id="IPR020602">
    <property type="entry name" value="GTP_CycHdrlase_I_dom"/>
</dbReference>
<dbReference type="NCBIfam" id="TIGR00063">
    <property type="entry name" value="folE"/>
    <property type="match status" value="1"/>
</dbReference>
<dbReference type="NCBIfam" id="NF006824">
    <property type="entry name" value="PRK09347.1-1"/>
    <property type="match status" value="1"/>
</dbReference>
<dbReference type="NCBIfam" id="NF006825">
    <property type="entry name" value="PRK09347.1-2"/>
    <property type="match status" value="1"/>
</dbReference>
<dbReference type="NCBIfam" id="NF006826">
    <property type="entry name" value="PRK09347.1-3"/>
    <property type="match status" value="1"/>
</dbReference>
<dbReference type="PANTHER" id="PTHR11109:SF7">
    <property type="entry name" value="GTP CYCLOHYDROLASE 1"/>
    <property type="match status" value="1"/>
</dbReference>
<dbReference type="PANTHER" id="PTHR11109">
    <property type="entry name" value="GTP CYCLOHYDROLASE I"/>
    <property type="match status" value="1"/>
</dbReference>
<dbReference type="Pfam" id="PF01227">
    <property type="entry name" value="GTP_cyclohydroI"/>
    <property type="match status" value="1"/>
</dbReference>
<dbReference type="SUPFAM" id="SSF55620">
    <property type="entry name" value="Tetrahydrobiopterin biosynthesis enzymes-like"/>
    <property type="match status" value="1"/>
</dbReference>
<dbReference type="PROSITE" id="PS00859">
    <property type="entry name" value="GTP_CYCLOHYDROL_1_1"/>
    <property type="match status" value="1"/>
</dbReference>
<dbReference type="PROSITE" id="PS00860">
    <property type="entry name" value="GTP_CYCLOHYDROL_1_2"/>
    <property type="match status" value="1"/>
</dbReference>
<comment type="catalytic activity">
    <reaction evidence="2">
        <text>GTP + H2O = 7,8-dihydroneopterin 3'-triphosphate + formate + H(+)</text>
        <dbReference type="Rhea" id="RHEA:17473"/>
        <dbReference type="ChEBI" id="CHEBI:15377"/>
        <dbReference type="ChEBI" id="CHEBI:15378"/>
        <dbReference type="ChEBI" id="CHEBI:15740"/>
        <dbReference type="ChEBI" id="CHEBI:37565"/>
        <dbReference type="ChEBI" id="CHEBI:58462"/>
        <dbReference type="EC" id="3.5.4.16"/>
    </reaction>
</comment>
<comment type="pathway">
    <text evidence="2">Cofactor biosynthesis; 7,8-dihydroneopterin triphosphate biosynthesis; 7,8-dihydroneopterin triphosphate from GTP: step 1/1.</text>
</comment>
<comment type="subunit">
    <text evidence="1">Toroid-shaped homodecamer, composed of two pentamers of five dimers.</text>
</comment>
<comment type="similarity">
    <text evidence="2">Belongs to the GTP cyclohydrolase I family.</text>
</comment>
<reference key="1">
    <citation type="submission" date="2007-08" db="EMBL/GenBank/DDBJ databases">
        <authorList>
            <consortium name="The Vibrio harveyi Genome Sequencing Project"/>
            <person name="Bassler B."/>
            <person name="Clifton S.W."/>
            <person name="Fulton L."/>
            <person name="Delehaunty K."/>
            <person name="Fronick C."/>
            <person name="Harrison M."/>
            <person name="Markivic C."/>
            <person name="Fulton R."/>
            <person name="Tin-Wollam A.-M."/>
            <person name="Shah N."/>
            <person name="Pepin K."/>
            <person name="Nash W."/>
            <person name="Thiruvilangam P."/>
            <person name="Bhonagiri V."/>
            <person name="Waters C."/>
            <person name="Tu K.C."/>
            <person name="Irgon J."/>
            <person name="Wilson R.K."/>
        </authorList>
    </citation>
    <scope>NUCLEOTIDE SEQUENCE [LARGE SCALE GENOMIC DNA]</scope>
    <source>
        <strain>ATCC BAA-1116 / BB120</strain>
    </source>
</reference>
<evidence type="ECO:0000250" key="1"/>
<evidence type="ECO:0000255" key="2">
    <source>
        <dbReference type="HAMAP-Rule" id="MF_00223"/>
    </source>
</evidence>
<feature type="chain" id="PRO_1000043757" description="GTP cyclohydrolase 1">
    <location>
        <begin position="1"/>
        <end position="217"/>
    </location>
</feature>
<feature type="binding site" evidence="2">
    <location>
        <position position="109"/>
    </location>
    <ligand>
        <name>Zn(2+)</name>
        <dbReference type="ChEBI" id="CHEBI:29105"/>
    </ligand>
</feature>
<feature type="binding site" evidence="2">
    <location>
        <position position="112"/>
    </location>
    <ligand>
        <name>Zn(2+)</name>
        <dbReference type="ChEBI" id="CHEBI:29105"/>
    </ligand>
</feature>
<feature type="binding site" evidence="2">
    <location>
        <position position="180"/>
    </location>
    <ligand>
        <name>Zn(2+)</name>
        <dbReference type="ChEBI" id="CHEBI:29105"/>
    </ligand>
</feature>
<gene>
    <name evidence="2" type="primary">folE</name>
    <name type="ordered locus">VIBHAR_06235</name>
</gene>